<sequence length="398" mass="44613">MVEPQEGKTRFHDFKLSNELMHAIHDLGFPYCTPIQAQVLGYTLRGQDAIGRAQTGTGKTAAFLISIISQLQQTPPPKERYMGEPRALIIAPTRELVVQIAKDAAALTKYTGLNVMSFVGGMDFDKQLKALEARHCDILVATPGRLLDFNQRGEVHLDMVEVMVLDEADRMLDMGFIPQVRQIIRQTPPKSERQTLLFSATFTDDVMNLAKQWTTNPAIVEIEPENVASETVEQHVYAVAGSDKYKLLYNLVTQNKWERVMVFANRKDEVRRIEEKLVRDGINAAQLSGDVPQHKRIRTLESFREGRITVLVATDVAGRGIHIDGISHVINFTLPEDPDDYVHRIGRTGRAGTSGVSISFAGEDDSYQLPAIEALLGRKIKCEMPPDELLKPVPRKHH</sequence>
<dbReference type="EC" id="3.6.4.13" evidence="1"/>
<dbReference type="EMBL" id="AE015451">
    <property type="protein sequence ID" value="AAN66919.1"/>
    <property type="molecule type" value="Genomic_DNA"/>
</dbReference>
<dbReference type="RefSeq" id="NP_743455.2">
    <property type="nucleotide sequence ID" value="NC_002947.4"/>
</dbReference>
<dbReference type="SMR" id="Q88NB7"/>
<dbReference type="STRING" id="160488.PP_1295"/>
<dbReference type="PaxDb" id="160488-PP_1295"/>
<dbReference type="KEGG" id="ppu:PP_1295"/>
<dbReference type="PATRIC" id="fig|160488.4.peg.1372"/>
<dbReference type="eggNOG" id="COG0513">
    <property type="taxonomic scope" value="Bacteria"/>
</dbReference>
<dbReference type="HOGENOM" id="CLU_003041_1_3_6"/>
<dbReference type="OrthoDB" id="9805696at2"/>
<dbReference type="PhylomeDB" id="Q88NB7"/>
<dbReference type="Proteomes" id="UP000000556">
    <property type="component" value="Chromosome"/>
</dbReference>
<dbReference type="GO" id="GO:0005829">
    <property type="term" value="C:cytosol"/>
    <property type="evidence" value="ECO:0007669"/>
    <property type="project" value="TreeGrafter"/>
</dbReference>
<dbReference type="GO" id="GO:0005524">
    <property type="term" value="F:ATP binding"/>
    <property type="evidence" value="ECO:0007669"/>
    <property type="project" value="UniProtKB-UniRule"/>
</dbReference>
<dbReference type="GO" id="GO:0016887">
    <property type="term" value="F:ATP hydrolysis activity"/>
    <property type="evidence" value="ECO:0007669"/>
    <property type="project" value="RHEA"/>
</dbReference>
<dbReference type="GO" id="GO:0003723">
    <property type="term" value="F:RNA binding"/>
    <property type="evidence" value="ECO:0007669"/>
    <property type="project" value="UniProtKB-UniRule"/>
</dbReference>
<dbReference type="GO" id="GO:0003724">
    <property type="term" value="F:RNA helicase activity"/>
    <property type="evidence" value="ECO:0007669"/>
    <property type="project" value="UniProtKB-UniRule"/>
</dbReference>
<dbReference type="GO" id="GO:0006401">
    <property type="term" value="P:RNA catabolic process"/>
    <property type="evidence" value="ECO:0007669"/>
    <property type="project" value="UniProtKB-UniRule"/>
</dbReference>
<dbReference type="CDD" id="cd00268">
    <property type="entry name" value="DEADc"/>
    <property type="match status" value="1"/>
</dbReference>
<dbReference type="CDD" id="cd18787">
    <property type="entry name" value="SF2_C_DEAD"/>
    <property type="match status" value="1"/>
</dbReference>
<dbReference type="Gene3D" id="3.40.50.300">
    <property type="entry name" value="P-loop containing nucleotide triphosphate hydrolases"/>
    <property type="match status" value="2"/>
</dbReference>
<dbReference type="HAMAP" id="MF_00661">
    <property type="entry name" value="DEAD_helicase_RhlB"/>
    <property type="match status" value="1"/>
</dbReference>
<dbReference type="InterPro" id="IPR011545">
    <property type="entry name" value="DEAD/DEAH_box_helicase_dom"/>
</dbReference>
<dbReference type="InterPro" id="IPR050079">
    <property type="entry name" value="DEAD_box_RNA_helicase"/>
</dbReference>
<dbReference type="InterPro" id="IPR014001">
    <property type="entry name" value="Helicase_ATP-bd"/>
</dbReference>
<dbReference type="InterPro" id="IPR001650">
    <property type="entry name" value="Helicase_C-like"/>
</dbReference>
<dbReference type="InterPro" id="IPR027417">
    <property type="entry name" value="P-loop_NTPase"/>
</dbReference>
<dbReference type="InterPro" id="IPR000629">
    <property type="entry name" value="RNA-helicase_DEAD-box_CS"/>
</dbReference>
<dbReference type="InterPro" id="IPR023554">
    <property type="entry name" value="RNA_helicase_ATP-dep_RhlB"/>
</dbReference>
<dbReference type="InterPro" id="IPR014014">
    <property type="entry name" value="RNA_helicase_DEAD_Q_motif"/>
</dbReference>
<dbReference type="NCBIfam" id="NF002340">
    <property type="entry name" value="PRK01297.1"/>
    <property type="match status" value="1"/>
</dbReference>
<dbReference type="PANTHER" id="PTHR47959:SF10">
    <property type="entry name" value="ATP-DEPENDENT RNA HELICASE RHLB"/>
    <property type="match status" value="1"/>
</dbReference>
<dbReference type="PANTHER" id="PTHR47959">
    <property type="entry name" value="ATP-DEPENDENT RNA HELICASE RHLE-RELATED"/>
    <property type="match status" value="1"/>
</dbReference>
<dbReference type="Pfam" id="PF00270">
    <property type="entry name" value="DEAD"/>
    <property type="match status" value="1"/>
</dbReference>
<dbReference type="Pfam" id="PF00271">
    <property type="entry name" value="Helicase_C"/>
    <property type="match status" value="1"/>
</dbReference>
<dbReference type="SMART" id="SM00487">
    <property type="entry name" value="DEXDc"/>
    <property type="match status" value="1"/>
</dbReference>
<dbReference type="SMART" id="SM00490">
    <property type="entry name" value="HELICc"/>
    <property type="match status" value="1"/>
</dbReference>
<dbReference type="SUPFAM" id="SSF52540">
    <property type="entry name" value="P-loop containing nucleoside triphosphate hydrolases"/>
    <property type="match status" value="1"/>
</dbReference>
<dbReference type="PROSITE" id="PS00039">
    <property type="entry name" value="DEAD_ATP_HELICASE"/>
    <property type="match status" value="1"/>
</dbReference>
<dbReference type="PROSITE" id="PS51192">
    <property type="entry name" value="HELICASE_ATP_BIND_1"/>
    <property type="match status" value="1"/>
</dbReference>
<dbReference type="PROSITE" id="PS51194">
    <property type="entry name" value="HELICASE_CTER"/>
    <property type="match status" value="1"/>
</dbReference>
<dbReference type="PROSITE" id="PS51195">
    <property type="entry name" value="Q_MOTIF"/>
    <property type="match status" value="1"/>
</dbReference>
<feature type="chain" id="PRO_0000200780" description="ATP-dependent RNA helicase RhlB">
    <location>
        <begin position="1"/>
        <end position="398"/>
    </location>
</feature>
<feature type="domain" description="Helicase ATP-binding" evidence="1">
    <location>
        <begin position="40"/>
        <end position="220"/>
    </location>
</feature>
<feature type="domain" description="Helicase C-terminal" evidence="1">
    <location>
        <begin position="243"/>
        <end position="393"/>
    </location>
</feature>
<feature type="short sequence motif" description="Q motif">
    <location>
        <begin position="9"/>
        <end position="37"/>
    </location>
</feature>
<feature type="short sequence motif" description="DEAD box">
    <location>
        <begin position="166"/>
        <end position="169"/>
    </location>
</feature>
<feature type="binding site" evidence="1">
    <location>
        <begin position="53"/>
        <end position="60"/>
    </location>
    <ligand>
        <name>ATP</name>
        <dbReference type="ChEBI" id="CHEBI:30616"/>
    </ligand>
</feature>
<protein>
    <recommendedName>
        <fullName evidence="1">ATP-dependent RNA helicase RhlB</fullName>
        <ecNumber evidence="1">3.6.4.13</ecNumber>
    </recommendedName>
</protein>
<gene>
    <name evidence="1" type="primary">rhlB</name>
    <name type="ordered locus">PP_1295</name>
</gene>
<reference key="1">
    <citation type="journal article" date="2002" name="Environ. Microbiol.">
        <title>Complete genome sequence and comparative analysis of the metabolically versatile Pseudomonas putida KT2440.</title>
        <authorList>
            <person name="Nelson K.E."/>
            <person name="Weinel C."/>
            <person name="Paulsen I.T."/>
            <person name="Dodson R.J."/>
            <person name="Hilbert H."/>
            <person name="Martins dos Santos V.A.P."/>
            <person name="Fouts D.E."/>
            <person name="Gill S.R."/>
            <person name="Pop M."/>
            <person name="Holmes M."/>
            <person name="Brinkac L.M."/>
            <person name="Beanan M.J."/>
            <person name="DeBoy R.T."/>
            <person name="Daugherty S.C."/>
            <person name="Kolonay J.F."/>
            <person name="Madupu R."/>
            <person name="Nelson W.C."/>
            <person name="White O."/>
            <person name="Peterson J.D."/>
            <person name="Khouri H.M."/>
            <person name="Hance I."/>
            <person name="Chris Lee P."/>
            <person name="Holtzapple E.K."/>
            <person name="Scanlan D."/>
            <person name="Tran K."/>
            <person name="Moazzez A."/>
            <person name="Utterback T.R."/>
            <person name="Rizzo M."/>
            <person name="Lee K."/>
            <person name="Kosack D."/>
            <person name="Moestl D."/>
            <person name="Wedler H."/>
            <person name="Lauber J."/>
            <person name="Stjepandic D."/>
            <person name="Hoheisel J."/>
            <person name="Straetz M."/>
            <person name="Heim S."/>
            <person name="Kiewitz C."/>
            <person name="Eisen J.A."/>
            <person name="Timmis K.N."/>
            <person name="Duesterhoeft A."/>
            <person name="Tuemmler B."/>
            <person name="Fraser C.M."/>
        </authorList>
    </citation>
    <scope>NUCLEOTIDE SEQUENCE [LARGE SCALE GENOMIC DNA]</scope>
    <source>
        <strain>ATCC 47054 / DSM 6125 / CFBP 8728 / NCIMB 11950 / KT2440</strain>
    </source>
</reference>
<organism>
    <name type="scientific">Pseudomonas putida (strain ATCC 47054 / DSM 6125 / CFBP 8728 / NCIMB 11950 / KT2440)</name>
    <dbReference type="NCBI Taxonomy" id="160488"/>
    <lineage>
        <taxon>Bacteria</taxon>
        <taxon>Pseudomonadati</taxon>
        <taxon>Pseudomonadota</taxon>
        <taxon>Gammaproteobacteria</taxon>
        <taxon>Pseudomonadales</taxon>
        <taxon>Pseudomonadaceae</taxon>
        <taxon>Pseudomonas</taxon>
    </lineage>
</organism>
<keyword id="KW-0067">ATP-binding</keyword>
<keyword id="KW-0963">Cytoplasm</keyword>
<keyword id="KW-0347">Helicase</keyword>
<keyword id="KW-0378">Hydrolase</keyword>
<keyword id="KW-0547">Nucleotide-binding</keyword>
<keyword id="KW-1185">Reference proteome</keyword>
<keyword id="KW-0694">RNA-binding</keyword>
<evidence type="ECO:0000255" key="1">
    <source>
        <dbReference type="HAMAP-Rule" id="MF_00661"/>
    </source>
</evidence>
<name>RHLB_PSEPK</name>
<proteinExistence type="inferred from homology"/>
<accession>Q88NB7</accession>
<comment type="function">
    <text evidence="1">DEAD-box RNA helicase involved in RNA degradation. Has RNA-dependent ATPase activity and unwinds double-stranded RNA.</text>
</comment>
<comment type="catalytic activity">
    <reaction evidence="1">
        <text>ATP + H2O = ADP + phosphate + H(+)</text>
        <dbReference type="Rhea" id="RHEA:13065"/>
        <dbReference type="ChEBI" id="CHEBI:15377"/>
        <dbReference type="ChEBI" id="CHEBI:15378"/>
        <dbReference type="ChEBI" id="CHEBI:30616"/>
        <dbReference type="ChEBI" id="CHEBI:43474"/>
        <dbReference type="ChEBI" id="CHEBI:456216"/>
        <dbReference type="EC" id="3.6.4.13"/>
    </reaction>
</comment>
<comment type="subunit">
    <text evidence="1">Component of the RNA degradosome, which is a multiprotein complex involved in RNA processing and mRNA degradation.</text>
</comment>
<comment type="subcellular location">
    <subcellularLocation>
        <location evidence="1">Cytoplasm</location>
    </subcellularLocation>
</comment>
<comment type="similarity">
    <text evidence="1">Belongs to the DEAD box helicase family. RhlB subfamily.</text>
</comment>